<proteinExistence type="evidence at protein level"/>
<accession>P29318</accession>
<evidence type="ECO:0000250" key="1"/>
<evidence type="ECO:0000250" key="2">
    <source>
        <dbReference type="UniProtKB" id="P29320"/>
    </source>
</evidence>
<evidence type="ECO:0000255" key="3"/>
<evidence type="ECO:0000255" key="4">
    <source>
        <dbReference type="PROSITE-ProRule" id="PRU00159"/>
    </source>
</evidence>
<evidence type="ECO:0000255" key="5">
    <source>
        <dbReference type="PROSITE-ProRule" id="PRU00184"/>
    </source>
</evidence>
<evidence type="ECO:0000255" key="6">
    <source>
        <dbReference type="PROSITE-ProRule" id="PRU00316"/>
    </source>
</evidence>
<evidence type="ECO:0000255" key="7">
    <source>
        <dbReference type="PROSITE-ProRule" id="PRU00883"/>
    </source>
</evidence>
<evidence type="ECO:0000255" key="8">
    <source>
        <dbReference type="PROSITE-ProRule" id="PRU10028"/>
    </source>
</evidence>
<evidence type="ECO:0000269" key="9">
    <source>
    </source>
</evidence>
<organism>
    <name type="scientific">Gallus gallus</name>
    <name type="common">Chicken</name>
    <dbReference type="NCBI Taxonomy" id="9031"/>
    <lineage>
        <taxon>Eukaryota</taxon>
        <taxon>Metazoa</taxon>
        <taxon>Chordata</taxon>
        <taxon>Craniata</taxon>
        <taxon>Vertebrata</taxon>
        <taxon>Euteleostomi</taxon>
        <taxon>Archelosauria</taxon>
        <taxon>Archosauria</taxon>
        <taxon>Dinosauria</taxon>
        <taxon>Saurischia</taxon>
        <taxon>Theropoda</taxon>
        <taxon>Coelurosauria</taxon>
        <taxon>Aves</taxon>
        <taxon>Neognathae</taxon>
        <taxon>Galloanserae</taxon>
        <taxon>Galliformes</taxon>
        <taxon>Phasianidae</taxon>
        <taxon>Phasianinae</taxon>
        <taxon>Gallus</taxon>
    </lineage>
</organism>
<gene>
    <name type="primary">EPHA3</name>
    <name type="synonym">CEK4</name>
    <name type="synonym">ETK1</name>
</gene>
<dbReference type="EC" id="2.7.10.1"/>
<dbReference type="EMBL" id="M68514">
    <property type="protein sequence ID" value="AAA48666.1"/>
    <property type="molecule type" value="mRNA"/>
</dbReference>
<dbReference type="PIR" id="B45583">
    <property type="entry name" value="B45583"/>
</dbReference>
<dbReference type="RefSeq" id="NP_990761.1">
    <property type="nucleotide sequence ID" value="NM_205430.2"/>
</dbReference>
<dbReference type="SMR" id="P29318"/>
<dbReference type="FunCoup" id="P29318">
    <property type="interactions" value="123"/>
</dbReference>
<dbReference type="IntAct" id="P29318">
    <property type="interactions" value="1"/>
</dbReference>
<dbReference type="STRING" id="9031.ENSGALP00000024798"/>
<dbReference type="GlyCosmos" id="P29318">
    <property type="glycosylation" value="5 sites, No reported glycans"/>
</dbReference>
<dbReference type="GlyGen" id="P29318">
    <property type="glycosylation" value="5 sites"/>
</dbReference>
<dbReference type="PaxDb" id="9031-ENSGALP00000024798"/>
<dbReference type="GeneID" id="396402"/>
<dbReference type="KEGG" id="gga:396402"/>
<dbReference type="CTD" id="2042"/>
<dbReference type="VEuPathDB" id="HostDB:geneid_396402"/>
<dbReference type="eggNOG" id="KOG0196">
    <property type="taxonomic scope" value="Eukaryota"/>
</dbReference>
<dbReference type="InParanoid" id="P29318"/>
<dbReference type="OrthoDB" id="4062651at2759"/>
<dbReference type="PhylomeDB" id="P29318"/>
<dbReference type="BRENDA" id="2.7.10.1">
    <property type="organism ID" value="1306"/>
</dbReference>
<dbReference type="PRO" id="PR:P29318"/>
<dbReference type="Proteomes" id="UP000000539">
    <property type="component" value="Unassembled WGS sequence"/>
</dbReference>
<dbReference type="GO" id="GO:0030425">
    <property type="term" value="C:dendrite"/>
    <property type="evidence" value="ECO:0000318"/>
    <property type="project" value="GO_Central"/>
</dbReference>
<dbReference type="GO" id="GO:0005769">
    <property type="term" value="C:early endosome"/>
    <property type="evidence" value="ECO:0000250"/>
    <property type="project" value="UniProtKB"/>
</dbReference>
<dbReference type="GO" id="GO:0005886">
    <property type="term" value="C:plasma membrane"/>
    <property type="evidence" value="ECO:0000250"/>
    <property type="project" value="UniProtKB"/>
</dbReference>
<dbReference type="GO" id="GO:0005524">
    <property type="term" value="F:ATP binding"/>
    <property type="evidence" value="ECO:0007669"/>
    <property type="project" value="UniProtKB-KW"/>
</dbReference>
<dbReference type="GO" id="GO:0005003">
    <property type="term" value="F:ephrin receptor activity"/>
    <property type="evidence" value="ECO:0000250"/>
    <property type="project" value="AgBase"/>
</dbReference>
<dbReference type="GO" id="GO:0005004">
    <property type="term" value="F:GPI-linked ephrin receptor activity"/>
    <property type="evidence" value="ECO:0000250"/>
    <property type="project" value="UniProtKB"/>
</dbReference>
<dbReference type="GO" id="GO:0005005">
    <property type="term" value="F:transmembrane-ephrin receptor activity"/>
    <property type="evidence" value="ECO:0000318"/>
    <property type="project" value="GO_Central"/>
</dbReference>
<dbReference type="GO" id="GO:0007411">
    <property type="term" value="P:axon guidance"/>
    <property type="evidence" value="ECO:0000318"/>
    <property type="project" value="GO_Central"/>
</dbReference>
<dbReference type="GO" id="GO:0016477">
    <property type="term" value="P:cell migration"/>
    <property type="evidence" value="ECO:0000250"/>
    <property type="project" value="UniProtKB"/>
</dbReference>
<dbReference type="GO" id="GO:0048013">
    <property type="term" value="P:ephrin receptor signaling pathway"/>
    <property type="evidence" value="ECO:0000250"/>
    <property type="project" value="UniProtKB"/>
</dbReference>
<dbReference type="GO" id="GO:0097156">
    <property type="term" value="P:fasciculation of motor neuron axon"/>
    <property type="evidence" value="ECO:0000250"/>
    <property type="project" value="UniProtKB"/>
</dbReference>
<dbReference type="GO" id="GO:0097155">
    <property type="term" value="P:fasciculation of sensory neuron axon"/>
    <property type="evidence" value="ECO:0000250"/>
    <property type="project" value="UniProtKB"/>
</dbReference>
<dbReference type="GO" id="GO:0032956">
    <property type="term" value="P:regulation of actin cytoskeleton organization"/>
    <property type="evidence" value="ECO:0000250"/>
    <property type="project" value="UniProtKB"/>
</dbReference>
<dbReference type="GO" id="GO:0010717">
    <property type="term" value="P:regulation of epithelial to mesenchymal transition"/>
    <property type="evidence" value="ECO:0000250"/>
    <property type="project" value="UniProtKB"/>
</dbReference>
<dbReference type="GO" id="GO:0051893">
    <property type="term" value="P:regulation of focal adhesion assembly"/>
    <property type="evidence" value="ECO:0000250"/>
    <property type="project" value="UniProtKB"/>
</dbReference>
<dbReference type="GO" id="GO:0043087">
    <property type="term" value="P:regulation of GTPase activity"/>
    <property type="evidence" value="ECO:0000250"/>
    <property type="project" value="UniProtKB"/>
</dbReference>
<dbReference type="GO" id="GO:0070507">
    <property type="term" value="P:regulation of microtubule cytoskeleton organization"/>
    <property type="evidence" value="ECO:0000250"/>
    <property type="project" value="UniProtKB"/>
</dbReference>
<dbReference type="CDD" id="cd10481">
    <property type="entry name" value="EphR_LBD_A3"/>
    <property type="match status" value="1"/>
</dbReference>
<dbReference type="CDD" id="cd00063">
    <property type="entry name" value="FN3"/>
    <property type="match status" value="2"/>
</dbReference>
<dbReference type="CDD" id="cd05066">
    <property type="entry name" value="PTKc_EphR_A"/>
    <property type="match status" value="1"/>
</dbReference>
<dbReference type="CDD" id="cd09544">
    <property type="entry name" value="SAM_EPH-A3"/>
    <property type="match status" value="1"/>
</dbReference>
<dbReference type="FunFam" id="1.10.150.50:FF:000046">
    <property type="entry name" value="ephrin type-A receptor 3"/>
    <property type="match status" value="1"/>
</dbReference>
<dbReference type="FunFam" id="2.60.40.10:FF:000041">
    <property type="entry name" value="ephrin type-A receptor 3"/>
    <property type="match status" value="1"/>
</dbReference>
<dbReference type="FunFam" id="1.10.510.10:FF:000019">
    <property type="entry name" value="Ephrin type-A receptor 5"/>
    <property type="match status" value="1"/>
</dbReference>
<dbReference type="FunFam" id="2.10.50.10:FF:000001">
    <property type="entry name" value="Ephrin type-A receptor 5"/>
    <property type="match status" value="1"/>
</dbReference>
<dbReference type="FunFam" id="2.60.40.10:FF:000045">
    <property type="entry name" value="Ephrin type-A receptor 5"/>
    <property type="match status" value="1"/>
</dbReference>
<dbReference type="FunFam" id="2.60.40.1770:FF:000001">
    <property type="entry name" value="Ephrin type-A receptor 5"/>
    <property type="match status" value="1"/>
</dbReference>
<dbReference type="FunFam" id="3.30.200.20:FF:000001">
    <property type="entry name" value="Ephrin type-A receptor 5"/>
    <property type="match status" value="1"/>
</dbReference>
<dbReference type="FunFam" id="2.60.120.260:FF:000001">
    <property type="entry name" value="Ephrin type-A receptor 7"/>
    <property type="match status" value="1"/>
</dbReference>
<dbReference type="Gene3D" id="2.60.40.1770">
    <property type="entry name" value="ephrin a2 ectodomain"/>
    <property type="match status" value="1"/>
</dbReference>
<dbReference type="Gene3D" id="2.60.120.260">
    <property type="entry name" value="Galactose-binding domain-like"/>
    <property type="match status" value="1"/>
</dbReference>
<dbReference type="Gene3D" id="2.60.40.10">
    <property type="entry name" value="Immunoglobulins"/>
    <property type="match status" value="2"/>
</dbReference>
<dbReference type="Gene3D" id="3.30.200.20">
    <property type="entry name" value="Phosphorylase Kinase, domain 1"/>
    <property type="match status" value="1"/>
</dbReference>
<dbReference type="Gene3D" id="1.10.150.50">
    <property type="entry name" value="Transcription Factor, Ets-1"/>
    <property type="match status" value="1"/>
</dbReference>
<dbReference type="Gene3D" id="1.10.510.10">
    <property type="entry name" value="Transferase(Phosphotransferase) domain 1"/>
    <property type="match status" value="1"/>
</dbReference>
<dbReference type="Gene3D" id="2.10.50.10">
    <property type="entry name" value="Tumor Necrosis Factor Receptor, subunit A, domain 2"/>
    <property type="match status" value="1"/>
</dbReference>
<dbReference type="InterPro" id="IPR027936">
    <property type="entry name" value="Eph_TM"/>
</dbReference>
<dbReference type="InterPro" id="IPR034266">
    <property type="entry name" value="EphA3_rcpt_lig-bd"/>
</dbReference>
<dbReference type="InterPro" id="IPR001090">
    <property type="entry name" value="Ephrin_rcpt_lig-bd_dom"/>
</dbReference>
<dbReference type="InterPro" id="IPR050449">
    <property type="entry name" value="Ephrin_rcpt_TKs"/>
</dbReference>
<dbReference type="InterPro" id="IPR003961">
    <property type="entry name" value="FN3_dom"/>
</dbReference>
<dbReference type="InterPro" id="IPR036116">
    <property type="entry name" value="FN3_sf"/>
</dbReference>
<dbReference type="InterPro" id="IPR008979">
    <property type="entry name" value="Galactose-bd-like_sf"/>
</dbReference>
<dbReference type="InterPro" id="IPR013783">
    <property type="entry name" value="Ig-like_fold"/>
</dbReference>
<dbReference type="InterPro" id="IPR011009">
    <property type="entry name" value="Kinase-like_dom_sf"/>
</dbReference>
<dbReference type="InterPro" id="IPR000719">
    <property type="entry name" value="Prot_kinase_dom"/>
</dbReference>
<dbReference type="InterPro" id="IPR017441">
    <property type="entry name" value="Protein_kinase_ATP_BS"/>
</dbReference>
<dbReference type="InterPro" id="IPR001660">
    <property type="entry name" value="SAM"/>
</dbReference>
<dbReference type="InterPro" id="IPR013761">
    <property type="entry name" value="SAM/pointed_sf"/>
</dbReference>
<dbReference type="InterPro" id="IPR001245">
    <property type="entry name" value="Ser-Thr/Tyr_kinase_cat_dom"/>
</dbReference>
<dbReference type="InterPro" id="IPR011641">
    <property type="entry name" value="Tyr-kin_ephrin_A/B_rcpt-like"/>
</dbReference>
<dbReference type="InterPro" id="IPR008266">
    <property type="entry name" value="Tyr_kinase_AS"/>
</dbReference>
<dbReference type="InterPro" id="IPR020635">
    <property type="entry name" value="Tyr_kinase_cat_dom"/>
</dbReference>
<dbReference type="InterPro" id="IPR016257">
    <property type="entry name" value="Tyr_kinase_ephrin_rcpt"/>
</dbReference>
<dbReference type="InterPro" id="IPR001426">
    <property type="entry name" value="Tyr_kinase_rcpt_V_CS"/>
</dbReference>
<dbReference type="PANTHER" id="PTHR46877">
    <property type="entry name" value="EPH RECEPTOR A5"/>
    <property type="match status" value="1"/>
</dbReference>
<dbReference type="PANTHER" id="PTHR46877:SF12">
    <property type="entry name" value="EPHRIN TYPE-A RECEPTOR 3"/>
    <property type="match status" value="1"/>
</dbReference>
<dbReference type="Pfam" id="PF14575">
    <property type="entry name" value="EphA2_TM"/>
    <property type="match status" value="1"/>
</dbReference>
<dbReference type="Pfam" id="PF01404">
    <property type="entry name" value="Ephrin_lbd"/>
    <property type="match status" value="1"/>
</dbReference>
<dbReference type="Pfam" id="PF07699">
    <property type="entry name" value="Ephrin_rec_like"/>
    <property type="match status" value="1"/>
</dbReference>
<dbReference type="Pfam" id="PF00041">
    <property type="entry name" value="fn3"/>
    <property type="match status" value="2"/>
</dbReference>
<dbReference type="Pfam" id="PF07714">
    <property type="entry name" value="PK_Tyr_Ser-Thr"/>
    <property type="match status" value="1"/>
</dbReference>
<dbReference type="Pfam" id="PF00536">
    <property type="entry name" value="SAM_1"/>
    <property type="match status" value="1"/>
</dbReference>
<dbReference type="PIRSF" id="PIRSF000666">
    <property type="entry name" value="TyrPK_ephrin_receptor"/>
    <property type="match status" value="1"/>
</dbReference>
<dbReference type="PRINTS" id="PR00014">
    <property type="entry name" value="FNTYPEIII"/>
</dbReference>
<dbReference type="PRINTS" id="PR00109">
    <property type="entry name" value="TYRKINASE"/>
</dbReference>
<dbReference type="SMART" id="SM00615">
    <property type="entry name" value="EPH_lbd"/>
    <property type="match status" value="1"/>
</dbReference>
<dbReference type="SMART" id="SM01411">
    <property type="entry name" value="Ephrin_rec_like"/>
    <property type="match status" value="1"/>
</dbReference>
<dbReference type="SMART" id="SM00060">
    <property type="entry name" value="FN3"/>
    <property type="match status" value="2"/>
</dbReference>
<dbReference type="SMART" id="SM00454">
    <property type="entry name" value="SAM"/>
    <property type="match status" value="1"/>
</dbReference>
<dbReference type="SMART" id="SM00219">
    <property type="entry name" value="TyrKc"/>
    <property type="match status" value="1"/>
</dbReference>
<dbReference type="SUPFAM" id="SSF49265">
    <property type="entry name" value="Fibronectin type III"/>
    <property type="match status" value="1"/>
</dbReference>
<dbReference type="SUPFAM" id="SSF49785">
    <property type="entry name" value="Galactose-binding domain-like"/>
    <property type="match status" value="1"/>
</dbReference>
<dbReference type="SUPFAM" id="SSF56112">
    <property type="entry name" value="Protein kinase-like (PK-like)"/>
    <property type="match status" value="1"/>
</dbReference>
<dbReference type="SUPFAM" id="SSF47769">
    <property type="entry name" value="SAM/Pointed domain"/>
    <property type="match status" value="1"/>
</dbReference>
<dbReference type="PROSITE" id="PS01186">
    <property type="entry name" value="EGF_2"/>
    <property type="match status" value="1"/>
</dbReference>
<dbReference type="PROSITE" id="PS51550">
    <property type="entry name" value="EPH_LBD"/>
    <property type="match status" value="1"/>
</dbReference>
<dbReference type="PROSITE" id="PS50853">
    <property type="entry name" value="FN3"/>
    <property type="match status" value="2"/>
</dbReference>
<dbReference type="PROSITE" id="PS00107">
    <property type="entry name" value="PROTEIN_KINASE_ATP"/>
    <property type="match status" value="1"/>
</dbReference>
<dbReference type="PROSITE" id="PS50011">
    <property type="entry name" value="PROTEIN_KINASE_DOM"/>
    <property type="match status" value="1"/>
</dbReference>
<dbReference type="PROSITE" id="PS00109">
    <property type="entry name" value="PROTEIN_KINASE_TYR"/>
    <property type="match status" value="1"/>
</dbReference>
<dbReference type="PROSITE" id="PS00790">
    <property type="entry name" value="RECEPTOR_TYR_KIN_V_1"/>
    <property type="match status" value="1"/>
</dbReference>
<dbReference type="PROSITE" id="PS00791">
    <property type="entry name" value="RECEPTOR_TYR_KIN_V_2"/>
    <property type="match status" value="1"/>
</dbReference>
<dbReference type="PROSITE" id="PS50105">
    <property type="entry name" value="SAM_DOMAIN"/>
    <property type="match status" value="1"/>
</dbReference>
<reference key="1">
    <citation type="journal article" date="1991" name="New Biol.">
        <title>Identification of a new eph-related receptor tyrosine kinase gene from mouse and chicken that is developmentally regulated and encodes at least two forms of the receptor.</title>
        <authorList>
            <person name="Sajjadi F.G."/>
            <person name="Pasquale E.B."/>
            <person name="Subramani S."/>
        </authorList>
    </citation>
    <scope>NUCLEOTIDE SEQUENCE [MRNA]</scope>
</reference>
<reference key="2">
    <citation type="journal article" date="2004" name="J. Neurosci.">
        <title>Loss-of-function analysis of EphA receptors in retinotectal mapping.</title>
        <authorList>
            <person name="Feldheim D.A."/>
            <person name="Nakamoto M."/>
            <person name="Osterfield M."/>
            <person name="Gale N.W."/>
            <person name="DeChiara T.M."/>
            <person name="Rohatgi R."/>
            <person name="Yancopoulos G.D."/>
            <person name="Flanagan J.G."/>
        </authorList>
    </citation>
    <scope>FUNCTION IN RETINOTECTAL MAPPING</scope>
</reference>
<keyword id="KW-0067">ATP-binding</keyword>
<keyword id="KW-1003">Cell membrane</keyword>
<keyword id="KW-0325">Glycoprotein</keyword>
<keyword id="KW-0418">Kinase</keyword>
<keyword id="KW-0472">Membrane</keyword>
<keyword id="KW-0547">Nucleotide-binding</keyword>
<keyword id="KW-0597">Phosphoprotein</keyword>
<keyword id="KW-0675">Receptor</keyword>
<keyword id="KW-1185">Reference proteome</keyword>
<keyword id="KW-0677">Repeat</keyword>
<keyword id="KW-0732">Signal</keyword>
<keyword id="KW-0808">Transferase</keyword>
<keyword id="KW-0812">Transmembrane</keyword>
<keyword id="KW-1133">Transmembrane helix</keyword>
<keyword id="KW-0829">Tyrosine-protein kinase</keyword>
<protein>
    <recommendedName>
        <fullName>Ephrin type-A receptor 3</fullName>
        <ecNumber>2.7.10.1</ecNumber>
    </recommendedName>
    <alternativeName>
        <fullName>EPH-like kinase 4</fullName>
        <shortName>EK4</shortName>
        <shortName>cEK4</shortName>
    </alternativeName>
    <alternativeName>
        <fullName>Tyrosine-protein kinase receptor ETK1</fullName>
    </alternativeName>
</protein>
<feature type="signal peptide" evidence="1">
    <location>
        <begin position="1"/>
        <end position="19"/>
    </location>
</feature>
<feature type="chain" id="PRO_0000016805" description="Ephrin type-A receptor 3">
    <location>
        <begin position="20"/>
        <end position="983"/>
    </location>
</feature>
<feature type="topological domain" description="Extracellular" evidence="3">
    <location>
        <begin position="20"/>
        <end position="540"/>
    </location>
</feature>
<feature type="transmembrane region" description="Helical" evidence="3">
    <location>
        <begin position="541"/>
        <end position="564"/>
    </location>
</feature>
<feature type="topological domain" description="Cytoplasmic" evidence="3">
    <location>
        <begin position="565"/>
        <end position="983"/>
    </location>
</feature>
<feature type="domain" description="Eph LBD" evidence="7">
    <location>
        <begin position="28"/>
        <end position="206"/>
    </location>
</feature>
<feature type="domain" description="Fibronectin type-III 1" evidence="6">
    <location>
        <begin position="324"/>
        <end position="434"/>
    </location>
</feature>
<feature type="domain" description="Fibronectin type-III 2" evidence="6">
    <location>
        <begin position="435"/>
        <end position="530"/>
    </location>
</feature>
<feature type="domain" description="Protein kinase" evidence="4">
    <location>
        <begin position="621"/>
        <end position="882"/>
    </location>
</feature>
<feature type="domain" description="SAM" evidence="5">
    <location>
        <begin position="911"/>
        <end position="975"/>
    </location>
</feature>
<feature type="short sequence motif" description="PDZ-binding" evidence="3">
    <location>
        <begin position="981"/>
        <end position="983"/>
    </location>
</feature>
<feature type="active site" description="Proton acceptor" evidence="4 8">
    <location>
        <position position="746"/>
    </location>
</feature>
<feature type="binding site" evidence="4">
    <location>
        <begin position="628"/>
        <end position="633"/>
    </location>
    <ligand>
        <name>ATP</name>
        <dbReference type="ChEBI" id="CHEBI:30616"/>
    </ligand>
</feature>
<feature type="binding site" evidence="4">
    <location>
        <position position="653"/>
    </location>
    <ligand>
        <name>ATP</name>
        <dbReference type="ChEBI" id="CHEBI:30616"/>
    </ligand>
</feature>
<feature type="binding site" evidence="4">
    <location>
        <begin position="700"/>
        <end position="706"/>
    </location>
    <ligand>
        <name>ATP</name>
        <dbReference type="ChEBI" id="CHEBI:30616"/>
    </ligand>
</feature>
<feature type="binding site" evidence="4">
    <location>
        <begin position="750"/>
        <end position="751"/>
    </location>
    <ligand>
        <name>ATP</name>
        <dbReference type="ChEBI" id="CHEBI:30616"/>
    </ligand>
</feature>
<feature type="modified residue" description="Phosphotyrosine; by autocatalysis" evidence="1">
    <location>
        <position position="596"/>
    </location>
</feature>
<feature type="modified residue" description="Phosphotyrosine; by autocatalysis" evidence="1">
    <location>
        <position position="602"/>
    </location>
</feature>
<feature type="modified residue" description="Phosphotyrosine; by autocatalysis" evidence="1">
    <location>
        <position position="701"/>
    </location>
</feature>
<feature type="modified residue" description="Phosphotyrosine; by autocatalysis" evidence="3">
    <location>
        <position position="779"/>
    </location>
</feature>
<feature type="glycosylation site" description="N-linked (GlcNAc...) asparagine" evidence="3">
    <location>
        <position position="231"/>
    </location>
</feature>
<feature type="glycosylation site" description="N-linked (GlcNAc...) asparagine" evidence="3">
    <location>
        <position position="336"/>
    </location>
</feature>
<feature type="glycosylation site" description="N-linked (GlcNAc...) asparagine" evidence="3">
    <location>
        <position position="390"/>
    </location>
</feature>
<feature type="glycosylation site" description="N-linked (GlcNAc...) asparagine" evidence="3">
    <location>
        <position position="403"/>
    </location>
</feature>
<feature type="glycosylation site" description="N-linked (GlcNAc...) asparagine" evidence="3">
    <location>
        <position position="492"/>
    </location>
</feature>
<sequence length="983" mass="109910">MDRRRLPLLLLCAALGSAGRLSARPGNEVNLLDSKTIQGELGWISYPSHGWEEISGVDEHYTPIRTYQESNVMDHSQNNWLRTNWIPRNSAQKIYVELKFTLRDCNSIPLVLGTCKETFNLYYMESDDDHLAKFREHQFTKIDTIAADESFTQMDLGDRILKLNTEVREVGPVSKKGFYLAFQDVGACVALVSVRVYFKKCPFTVKNLAMFPDTVPMDSQSLVEVRGSCVNHSKEEEPPKMYCSTEGEWLVPIGKCLCNAGYEERGFACQACRPGFYKASAGNVKCAKCPPHSSTYEDASLNCRCEKNYFRSEKDPPSMACTRPPSAPRNVISNINETSVILDWSWPLDTGGRKDVTFNIICKKCGGSSKICEPCSDNVRFLPRQTGLTNTTVTVVDLLAHTNYTFEIDAVNGVSDLSTLSRQFAAVSITTNQAAPSPITVIRKDRTSRNSVSLSWQEPEHPNGIILDYEVKYYEKQEQETSYTILRAKSTNVTISGLKPDTTYVFQIRARTAARYGTSSRKFEFETSPDSFSISSENSQVVMIAISAAVAIILLTVVVYVLIGRFCGYKKSKHGTDEKRLHFGNGHLKLPGLRTYVDPHTYEDPNQAVHEFAKELDASNISIDKVVGAGEFGEVCSGRLKLPSKKEISVAIKTLKAGYTEKQRRDFLGEASIMGQFDHPNIIRLEGVVTKSKPVMIVTEYMENGSLDSFLRKHDAQFTVIQLVGMLRGIASGMKYLSDMGYVHRDLAARNILINSNLVCKVSDFGLSRVLEDDPEAAYTTRGGKIPIRWTSPEAIAYRKFTSASDAWSYGIVLWEVMSYGERPYWEMSFQDVIKAVDEGYRLPPPMDCPAALYQLMLDCWQKDRNNRPKFEQIVSILDKLIRNPSSLKIITNAAARPSNLLLDQSNIDISAFRTAGDWLNGFRTGQCKGIFTGVEYSSCDTIAKISTDDMKKVGVTVVGPQKKIVSSIKTLETHTKNSPVPV</sequence>
<comment type="function">
    <text evidence="9">Receptor tyrosine kinase which binds promiscuously membrane-bound ephrin family ligands residing on adjacent cells, leading to contact-dependent bidirectional signaling into neighboring cells. The signaling pathway downstream of the receptor is referred to as forward signaling while the signaling pathway downstream of the ephrin ligand is referred to as reverse signaling. Highly promiscuous for ephrin-A ligands it binds preferentially EFNA5. Upon activation by EFNA5 regulates cell-cell adhesion, cytoskeletal organization and cell migration. Plays a role in cardiac cells migration and differentiation probably through activation by EFNA1. Involved in the retinotectal mapping of neurons. May also control the segregation but not the guidance of motor and sensory axons during neuromuscular circuit development.</text>
</comment>
<comment type="catalytic activity">
    <reaction evidence="8">
        <text>L-tyrosyl-[protein] + ATP = O-phospho-L-tyrosyl-[protein] + ADP + H(+)</text>
        <dbReference type="Rhea" id="RHEA:10596"/>
        <dbReference type="Rhea" id="RHEA-COMP:10136"/>
        <dbReference type="Rhea" id="RHEA-COMP:20101"/>
        <dbReference type="ChEBI" id="CHEBI:15378"/>
        <dbReference type="ChEBI" id="CHEBI:30616"/>
        <dbReference type="ChEBI" id="CHEBI:46858"/>
        <dbReference type="ChEBI" id="CHEBI:61978"/>
        <dbReference type="ChEBI" id="CHEBI:456216"/>
        <dbReference type="EC" id="2.7.10.1"/>
    </reaction>
</comment>
<comment type="subunit">
    <text evidence="1">Heterotetramer upon binding of the ligand. The heterotetramer is composed of an ephrin dimer and a receptor dimer. Oligomerization is probably required to induce biological responses (By similarity).</text>
</comment>
<comment type="subcellular location">
    <subcellularLocation>
        <location evidence="2">Cell membrane</location>
        <topology evidence="3">Single-pass type I membrane protein</topology>
    </subcellularLocation>
</comment>
<comment type="tissue specificity">
    <text>Highly expressed in the developing brain and embryonic tissues. In adult, the greatest levels of expression occur in the brain. It is expressed in a graded manner across the retina with the highest expression at its temporal pole. Detectable in all other adult tissues examined, except the liver.</text>
</comment>
<comment type="PTM">
    <text evidence="1">Autophosphorylates upon activation by EFNA5.</text>
</comment>
<comment type="similarity">
    <text evidence="4">Belongs to the protein kinase superfamily. Tyr protein kinase family. Ephrin receptor subfamily.</text>
</comment>
<name>EPHA3_CHICK</name>